<sequence>MEPPSRHAGTDIIIEDARWRASVPGTERAIRRALVAVARQGGPDFTQSPAPSILLATDRIVKRLNARFRDKNKPTNVLTFEPLSPMHGGDIVLGYETVRREAAAARRSLRAHLSHLVVHGALHLAGYDHHHPGEAREMEGIETRTLRSLGFGDPWRQGNWQQAGSVRI</sequence>
<gene>
    <name evidence="1" type="primary">ybeY</name>
    <name type="ordered locus">GOX2007</name>
</gene>
<organism>
    <name type="scientific">Gluconobacter oxydans (strain 621H)</name>
    <name type="common">Gluconobacter suboxydans</name>
    <dbReference type="NCBI Taxonomy" id="290633"/>
    <lineage>
        <taxon>Bacteria</taxon>
        <taxon>Pseudomonadati</taxon>
        <taxon>Pseudomonadota</taxon>
        <taxon>Alphaproteobacteria</taxon>
        <taxon>Acetobacterales</taxon>
        <taxon>Acetobacteraceae</taxon>
        <taxon>Gluconobacter</taxon>
    </lineage>
</organism>
<comment type="function">
    <text evidence="1">Single strand-specific metallo-endoribonuclease involved in late-stage 70S ribosome quality control and in maturation of the 3' terminus of the 16S rRNA.</text>
</comment>
<comment type="cofactor">
    <cofactor evidence="1">
        <name>Zn(2+)</name>
        <dbReference type="ChEBI" id="CHEBI:29105"/>
    </cofactor>
    <text evidence="1">Binds 1 zinc ion.</text>
</comment>
<comment type="subcellular location">
    <subcellularLocation>
        <location evidence="1">Cytoplasm</location>
    </subcellularLocation>
</comment>
<comment type="similarity">
    <text evidence="1">Belongs to the endoribonuclease YbeY family.</text>
</comment>
<feature type="chain" id="PRO_0000102460" description="Endoribonuclease YbeY">
    <location>
        <begin position="1"/>
        <end position="168"/>
    </location>
</feature>
<feature type="binding site" evidence="1">
    <location>
        <position position="119"/>
    </location>
    <ligand>
        <name>Zn(2+)</name>
        <dbReference type="ChEBI" id="CHEBI:29105"/>
        <note>catalytic</note>
    </ligand>
</feature>
<feature type="binding site" evidence="1">
    <location>
        <position position="123"/>
    </location>
    <ligand>
        <name>Zn(2+)</name>
        <dbReference type="ChEBI" id="CHEBI:29105"/>
        <note>catalytic</note>
    </ligand>
</feature>
<feature type="binding site" evidence="1">
    <location>
        <position position="129"/>
    </location>
    <ligand>
        <name>Zn(2+)</name>
        <dbReference type="ChEBI" id="CHEBI:29105"/>
        <note>catalytic</note>
    </ligand>
</feature>
<accession>Q5FPF3</accession>
<reference key="1">
    <citation type="journal article" date="2005" name="Nat. Biotechnol.">
        <title>Complete genome sequence of the acetic acid bacterium Gluconobacter oxydans.</title>
        <authorList>
            <person name="Prust C."/>
            <person name="Hoffmeister M."/>
            <person name="Liesegang H."/>
            <person name="Wiezer A."/>
            <person name="Fricke W.F."/>
            <person name="Ehrenreich A."/>
            <person name="Gottschalk G."/>
            <person name="Deppenmeier U."/>
        </authorList>
    </citation>
    <scope>NUCLEOTIDE SEQUENCE [LARGE SCALE GENOMIC DNA]</scope>
    <source>
        <strain>621H</strain>
    </source>
</reference>
<name>YBEY_GLUOX</name>
<evidence type="ECO:0000255" key="1">
    <source>
        <dbReference type="HAMAP-Rule" id="MF_00009"/>
    </source>
</evidence>
<protein>
    <recommendedName>
        <fullName evidence="1">Endoribonuclease YbeY</fullName>
        <ecNumber evidence="1">3.1.-.-</ecNumber>
    </recommendedName>
</protein>
<proteinExistence type="inferred from homology"/>
<keyword id="KW-0963">Cytoplasm</keyword>
<keyword id="KW-0255">Endonuclease</keyword>
<keyword id="KW-0378">Hydrolase</keyword>
<keyword id="KW-0479">Metal-binding</keyword>
<keyword id="KW-0540">Nuclease</keyword>
<keyword id="KW-1185">Reference proteome</keyword>
<keyword id="KW-0690">Ribosome biogenesis</keyword>
<keyword id="KW-0698">rRNA processing</keyword>
<keyword id="KW-0862">Zinc</keyword>
<dbReference type="EC" id="3.1.-.-" evidence="1"/>
<dbReference type="EMBL" id="CP000009">
    <property type="protein sequence ID" value="AAW61743.1"/>
    <property type="molecule type" value="Genomic_DNA"/>
</dbReference>
<dbReference type="RefSeq" id="WP_011253520.1">
    <property type="nucleotide sequence ID" value="NZ_LT900338.1"/>
</dbReference>
<dbReference type="SMR" id="Q5FPF3"/>
<dbReference type="STRING" id="290633.GOX2007"/>
<dbReference type="GeneID" id="56906345"/>
<dbReference type="KEGG" id="gox:GOX2007"/>
<dbReference type="eggNOG" id="COG0319">
    <property type="taxonomic scope" value="Bacteria"/>
</dbReference>
<dbReference type="HOGENOM" id="CLU_106710_0_0_5"/>
<dbReference type="Proteomes" id="UP000006375">
    <property type="component" value="Chromosome"/>
</dbReference>
<dbReference type="GO" id="GO:0005737">
    <property type="term" value="C:cytoplasm"/>
    <property type="evidence" value="ECO:0007669"/>
    <property type="project" value="UniProtKB-SubCell"/>
</dbReference>
<dbReference type="GO" id="GO:0004222">
    <property type="term" value="F:metalloendopeptidase activity"/>
    <property type="evidence" value="ECO:0007669"/>
    <property type="project" value="InterPro"/>
</dbReference>
<dbReference type="GO" id="GO:0004521">
    <property type="term" value="F:RNA endonuclease activity"/>
    <property type="evidence" value="ECO:0007669"/>
    <property type="project" value="UniProtKB-UniRule"/>
</dbReference>
<dbReference type="GO" id="GO:0008270">
    <property type="term" value="F:zinc ion binding"/>
    <property type="evidence" value="ECO:0007669"/>
    <property type="project" value="UniProtKB-UniRule"/>
</dbReference>
<dbReference type="GO" id="GO:0006364">
    <property type="term" value="P:rRNA processing"/>
    <property type="evidence" value="ECO:0007669"/>
    <property type="project" value="UniProtKB-UniRule"/>
</dbReference>
<dbReference type="Gene3D" id="3.40.390.30">
    <property type="entry name" value="Metalloproteases ('zincins'), catalytic domain"/>
    <property type="match status" value="1"/>
</dbReference>
<dbReference type="HAMAP" id="MF_00009">
    <property type="entry name" value="Endoribonucl_YbeY"/>
    <property type="match status" value="1"/>
</dbReference>
<dbReference type="InterPro" id="IPR023091">
    <property type="entry name" value="MetalPrtase_cat_dom_sf_prd"/>
</dbReference>
<dbReference type="InterPro" id="IPR002036">
    <property type="entry name" value="YbeY"/>
</dbReference>
<dbReference type="InterPro" id="IPR020549">
    <property type="entry name" value="YbeY_CS"/>
</dbReference>
<dbReference type="NCBIfam" id="TIGR00043">
    <property type="entry name" value="rRNA maturation RNase YbeY"/>
    <property type="match status" value="1"/>
</dbReference>
<dbReference type="PANTHER" id="PTHR46986">
    <property type="entry name" value="ENDORIBONUCLEASE YBEY, CHLOROPLASTIC"/>
    <property type="match status" value="1"/>
</dbReference>
<dbReference type="PANTHER" id="PTHR46986:SF1">
    <property type="entry name" value="ENDORIBONUCLEASE YBEY, CHLOROPLASTIC"/>
    <property type="match status" value="1"/>
</dbReference>
<dbReference type="Pfam" id="PF02130">
    <property type="entry name" value="YbeY"/>
    <property type="match status" value="1"/>
</dbReference>
<dbReference type="SUPFAM" id="SSF55486">
    <property type="entry name" value="Metalloproteases ('zincins'), catalytic domain"/>
    <property type="match status" value="1"/>
</dbReference>
<dbReference type="PROSITE" id="PS01306">
    <property type="entry name" value="UPF0054"/>
    <property type="match status" value="1"/>
</dbReference>